<keyword id="KW-0130">Cell adhesion</keyword>
<keyword id="KW-0176">Collagen</keyword>
<keyword id="KW-1015">Disulfide bond</keyword>
<keyword id="KW-0272">Extracellular matrix</keyword>
<keyword id="KW-0325">Glycoprotein</keyword>
<keyword id="KW-0379">Hydroxylation</keyword>
<keyword id="KW-1185">Reference proteome</keyword>
<keyword id="KW-0677">Repeat</keyword>
<keyword id="KW-0964">Secreted</keyword>
<accession>Q28902</accession>
<proteinExistence type="evidence at transcript level"/>
<dbReference type="EMBL" id="S78179">
    <property type="protein sequence ID" value="AAB34889.2"/>
    <property type="molecule type" value="mRNA"/>
</dbReference>
<dbReference type="SMR" id="Q28902"/>
<dbReference type="STRING" id="9986.ENSOCUP00000013193"/>
<dbReference type="PaxDb" id="9986-ENSOCUP00000013193"/>
<dbReference type="eggNOG" id="KOG3544">
    <property type="taxonomic scope" value="Eukaryota"/>
</dbReference>
<dbReference type="InParanoid" id="Q28902"/>
<dbReference type="Proteomes" id="UP000001811">
    <property type="component" value="Unplaced"/>
</dbReference>
<dbReference type="GO" id="GO:0005581">
    <property type="term" value="C:collagen trimer"/>
    <property type="evidence" value="ECO:0007669"/>
    <property type="project" value="UniProtKB-KW"/>
</dbReference>
<dbReference type="GO" id="GO:0005576">
    <property type="term" value="C:extracellular region"/>
    <property type="evidence" value="ECO:0007669"/>
    <property type="project" value="UniProtKB-KW"/>
</dbReference>
<dbReference type="GO" id="GO:0007155">
    <property type="term" value="P:cell adhesion"/>
    <property type="evidence" value="ECO:0007669"/>
    <property type="project" value="UniProtKB-KW"/>
</dbReference>
<dbReference type="CDD" id="cd00063">
    <property type="entry name" value="FN3"/>
    <property type="match status" value="5"/>
</dbReference>
<dbReference type="FunFam" id="2.60.40.10:FF:000018">
    <property type="entry name" value="collagen alpha-1(XII) chain isoform X1"/>
    <property type="match status" value="2"/>
</dbReference>
<dbReference type="FunFam" id="2.60.40.10:FF:000816">
    <property type="entry name" value="collagen alpha-1(XII) chain isoform X2"/>
    <property type="match status" value="1"/>
</dbReference>
<dbReference type="FunFam" id="2.60.40.10:FF:000121">
    <property type="entry name" value="Collagen type XII alpha 1 chain"/>
    <property type="match status" value="1"/>
</dbReference>
<dbReference type="FunFam" id="2.60.40.10:FF:000480">
    <property type="entry name" value="Collagen, type XII, alpha 1"/>
    <property type="match status" value="1"/>
</dbReference>
<dbReference type="Gene3D" id="2.60.40.10">
    <property type="entry name" value="Immunoglobulins"/>
    <property type="match status" value="6"/>
</dbReference>
<dbReference type="Gene3D" id="3.40.50.410">
    <property type="entry name" value="von Willebrand factor, type A domain"/>
    <property type="match status" value="1"/>
</dbReference>
<dbReference type="InterPro" id="IPR050991">
    <property type="entry name" value="ECM_Regulatory_Proteins"/>
</dbReference>
<dbReference type="InterPro" id="IPR003961">
    <property type="entry name" value="FN3_dom"/>
</dbReference>
<dbReference type="InterPro" id="IPR036116">
    <property type="entry name" value="FN3_sf"/>
</dbReference>
<dbReference type="InterPro" id="IPR013783">
    <property type="entry name" value="Ig-like_fold"/>
</dbReference>
<dbReference type="InterPro" id="IPR002035">
    <property type="entry name" value="VWF_A"/>
</dbReference>
<dbReference type="InterPro" id="IPR036465">
    <property type="entry name" value="vWFA_dom_sf"/>
</dbReference>
<dbReference type="PANTHER" id="PTHR46708:SF2">
    <property type="entry name" value="FIBRONECTIN TYPE-III DOMAIN-CONTAINING PROTEIN"/>
    <property type="match status" value="1"/>
</dbReference>
<dbReference type="PANTHER" id="PTHR46708">
    <property type="entry name" value="TENASCIN"/>
    <property type="match status" value="1"/>
</dbReference>
<dbReference type="Pfam" id="PF00041">
    <property type="entry name" value="fn3"/>
    <property type="match status" value="5"/>
</dbReference>
<dbReference type="Pfam" id="PF00092">
    <property type="entry name" value="VWA"/>
    <property type="match status" value="1"/>
</dbReference>
<dbReference type="SMART" id="SM00060">
    <property type="entry name" value="FN3"/>
    <property type="match status" value="5"/>
</dbReference>
<dbReference type="SMART" id="SM00327">
    <property type="entry name" value="VWA"/>
    <property type="match status" value="1"/>
</dbReference>
<dbReference type="SUPFAM" id="SSF49265">
    <property type="entry name" value="Fibronectin type III"/>
    <property type="match status" value="4"/>
</dbReference>
<dbReference type="SUPFAM" id="SSF53300">
    <property type="entry name" value="vWA-like"/>
    <property type="match status" value="1"/>
</dbReference>
<dbReference type="PROSITE" id="PS50853">
    <property type="entry name" value="FN3"/>
    <property type="match status" value="5"/>
</dbReference>
<dbReference type="PROSITE" id="PS50234">
    <property type="entry name" value="VWFA"/>
    <property type="match status" value="1"/>
</dbReference>
<comment type="function">
    <text evidence="1">Type XII collagen interacts with type I collagen-containing fibrils, the COL1 domain could be associated with the surface of the fibrils, and the COL2 and NC3 domains may be localized in the perifibrillar matrix.</text>
</comment>
<comment type="subunit">
    <text evidence="1">Trimer of identical chains each containing 190 kDa of non-triple-helical sequences.</text>
</comment>
<comment type="subcellular location">
    <subcellularLocation>
        <location evidence="1">Secreted</location>
        <location evidence="1">Extracellular space</location>
        <location evidence="1">Extracellular matrix</location>
    </subcellularLocation>
</comment>
<comment type="PTM">
    <text evidence="1">The triple-helical tail is stabilized by disulfide bonds at each end.</text>
</comment>
<comment type="PTM">
    <text evidence="1">Prolines at the third position of the tripeptide repeating unit (G-X-Y) are hydroxylated in some or all of the chains.</text>
</comment>
<comment type="PTM">
    <text evidence="1">O-glycosylated; glycosaminoglycan of chondroitin-sulfate type.</text>
</comment>
<comment type="similarity">
    <text evidence="5">Belongs to the fibril-associated collagens with interrupted helices (FACIT) family.</text>
</comment>
<gene>
    <name type="primary">COL12A1</name>
</gene>
<evidence type="ECO:0000250" key="1"/>
<evidence type="ECO:0000255" key="2">
    <source>
        <dbReference type="PROSITE-ProRule" id="PRU00219"/>
    </source>
</evidence>
<evidence type="ECO:0000255" key="3">
    <source>
        <dbReference type="PROSITE-ProRule" id="PRU00316"/>
    </source>
</evidence>
<evidence type="ECO:0000256" key="4">
    <source>
        <dbReference type="SAM" id="MobiDB-lite"/>
    </source>
</evidence>
<evidence type="ECO:0000305" key="5"/>
<name>COCA1_RABIT</name>
<feature type="chain" id="PRO_0000059402" description="Collagen alpha-1(XII) chain">
    <location>
        <begin position="1" status="less than"/>
        <end position="639" status="greater than"/>
    </location>
</feature>
<feature type="domain" description="VWFA" evidence="2">
    <location>
        <begin position="1" status="less than"/>
        <end position="114"/>
    </location>
</feature>
<feature type="domain" description="Fibronectin type-III 1" evidence="3">
    <location>
        <begin position="130"/>
        <end position="219"/>
    </location>
</feature>
<feature type="domain" description="Fibronectin type-III 2" evidence="3">
    <location>
        <begin position="220"/>
        <end position="310"/>
    </location>
</feature>
<feature type="domain" description="Fibronectin type-III 3" evidence="3">
    <location>
        <begin position="311"/>
        <end position="401"/>
    </location>
</feature>
<feature type="domain" description="Fibronectin type-III 4" evidence="3">
    <location>
        <begin position="402"/>
        <end position="490"/>
    </location>
</feature>
<feature type="domain" description="Fibronectin type-III 5" evidence="3">
    <location>
        <begin position="491"/>
        <end position="585"/>
    </location>
</feature>
<feature type="domain" description="Fibronectin type-III 6" evidence="3">
    <location>
        <begin position="586"/>
        <end position="639" status="greater than"/>
    </location>
</feature>
<feature type="region of interest" description="Disordered" evidence="4">
    <location>
        <begin position="473"/>
        <end position="496"/>
    </location>
</feature>
<feature type="non-terminal residue">
    <location>
        <position position="1"/>
    </location>
</feature>
<feature type="non-terminal residue">
    <location>
        <position position="639"/>
    </location>
</feature>
<organism>
    <name type="scientific">Oryctolagus cuniculus</name>
    <name type="common">Rabbit</name>
    <dbReference type="NCBI Taxonomy" id="9986"/>
    <lineage>
        <taxon>Eukaryota</taxon>
        <taxon>Metazoa</taxon>
        <taxon>Chordata</taxon>
        <taxon>Craniata</taxon>
        <taxon>Vertebrata</taxon>
        <taxon>Euteleostomi</taxon>
        <taxon>Mammalia</taxon>
        <taxon>Eutheria</taxon>
        <taxon>Euarchontoglires</taxon>
        <taxon>Glires</taxon>
        <taxon>Lagomorpha</taxon>
        <taxon>Leporidae</taxon>
        <taxon>Oryctolagus</taxon>
    </lineage>
</organism>
<protein>
    <recommendedName>
        <fullName>Collagen alpha-1(XII) chain</fullName>
    </recommendedName>
</protein>
<reference key="1">
    <citation type="journal article" date="1995" name="Exp. Eye Res.">
        <title>Localization of type XII collagen in normal and healing rabbit cornea by in situ hybridization.</title>
        <authorList>
            <person name="Zhan Q."/>
            <person name="Burrows R."/>
            <person name="Cintron C."/>
        </authorList>
    </citation>
    <scope>NUCLEOTIDE SEQUENCE [MRNA]</scope>
    <source>
        <tissue>Cornea</tissue>
    </source>
</reference>
<sequence>CRKSLLQAVANLPYKGGNTLTGMALNFIRQQNFKTQAGMRPRARKIGVLITDGKSQDDVEAPSKKLKDEGVELFAIGIKNADEVELKMIATDPDDTHAYNVADFDSLSKIVDDLTINLCNSVKGPGDLEAPSNLVISERTHRSFRVSWTPPSDSVDRYKVEYYPVSGGKRQEFYVSRLETSTVLKDLKPETEYVVNVYSVVEDEYSEPLKGTEKTLPVPIVSLNIYDIGPTTMRVQWQPVGGATGYTVSYEPVKTTESTKPKEMRVGPTVNDVQLTDLLPSTEYEVTVQAVLHDLTSEPATAREMTLPLPRPQDVKLRDVTHSTMSVFWEPVLGKVRKYVVRYQTPEEDVKEVEVDRSRTSTSLKDLLSQTLYTVSVSAVYDEGESPPVTAQETTRPVPAPTNLRITEVTPESFRGTWDHGASDVSLYRITWAPFGSSDKMETILNGDENTLVFENLNPNTLYEVSVTAIYPDESESDDLTGSERTSPKSGPRNLQVYNATSNSLTVKWDPASGRVQKYRITYQPSRGEGNEQTTTIGGRQNSVVLQKLKPDTPYTITVSSLYPDGEGGRMTGRGKTKPLNTVRNLRVYDPSTSTLNVRWDHAEGNPRQYKLFYAPTAGGSEELVPIPGNTNYAILRNL</sequence>